<dbReference type="EMBL" id="AF031160">
    <property type="protein sequence ID" value="AAC35874.1"/>
    <property type="molecule type" value="Genomic_DNA"/>
</dbReference>
<dbReference type="RefSeq" id="WP_071936950.1">
    <property type="nucleotide sequence ID" value="NZ_CP013197.1"/>
</dbReference>
<dbReference type="SMR" id="O31165"/>
<dbReference type="STRING" id="2133.SCITRI_00341"/>
<dbReference type="GeneID" id="54238278"/>
<dbReference type="OrthoDB" id="9806379at2"/>
<dbReference type="GO" id="GO:0022625">
    <property type="term" value="C:cytosolic large ribosomal subunit"/>
    <property type="evidence" value="ECO:0007669"/>
    <property type="project" value="TreeGrafter"/>
</dbReference>
<dbReference type="GO" id="GO:0070180">
    <property type="term" value="F:large ribosomal subunit rRNA binding"/>
    <property type="evidence" value="ECO:0007669"/>
    <property type="project" value="TreeGrafter"/>
</dbReference>
<dbReference type="GO" id="GO:0003735">
    <property type="term" value="F:structural constituent of ribosome"/>
    <property type="evidence" value="ECO:0007669"/>
    <property type="project" value="InterPro"/>
</dbReference>
<dbReference type="GO" id="GO:0006412">
    <property type="term" value="P:translation"/>
    <property type="evidence" value="ECO:0007669"/>
    <property type="project" value="UniProtKB-UniRule"/>
</dbReference>
<dbReference type="CDD" id="cd00337">
    <property type="entry name" value="Ribosomal_uL14"/>
    <property type="match status" value="1"/>
</dbReference>
<dbReference type="Gene3D" id="2.40.150.20">
    <property type="entry name" value="Ribosomal protein L14"/>
    <property type="match status" value="1"/>
</dbReference>
<dbReference type="HAMAP" id="MF_01367">
    <property type="entry name" value="Ribosomal_uL14"/>
    <property type="match status" value="1"/>
</dbReference>
<dbReference type="InterPro" id="IPR000218">
    <property type="entry name" value="Ribosomal_uL14"/>
</dbReference>
<dbReference type="InterPro" id="IPR005745">
    <property type="entry name" value="Ribosomal_uL14_bac-type"/>
</dbReference>
<dbReference type="InterPro" id="IPR019972">
    <property type="entry name" value="Ribosomal_uL14_CS"/>
</dbReference>
<dbReference type="InterPro" id="IPR036853">
    <property type="entry name" value="Ribosomal_uL14_sf"/>
</dbReference>
<dbReference type="NCBIfam" id="TIGR01067">
    <property type="entry name" value="rplN_bact"/>
    <property type="match status" value="1"/>
</dbReference>
<dbReference type="PANTHER" id="PTHR11761">
    <property type="entry name" value="50S/60S RIBOSOMAL PROTEIN L14/L23"/>
    <property type="match status" value="1"/>
</dbReference>
<dbReference type="PANTHER" id="PTHR11761:SF3">
    <property type="entry name" value="LARGE RIBOSOMAL SUBUNIT PROTEIN UL14M"/>
    <property type="match status" value="1"/>
</dbReference>
<dbReference type="Pfam" id="PF00238">
    <property type="entry name" value="Ribosomal_L14"/>
    <property type="match status" value="1"/>
</dbReference>
<dbReference type="SMART" id="SM01374">
    <property type="entry name" value="Ribosomal_L14"/>
    <property type="match status" value="1"/>
</dbReference>
<dbReference type="SUPFAM" id="SSF50193">
    <property type="entry name" value="Ribosomal protein L14"/>
    <property type="match status" value="1"/>
</dbReference>
<dbReference type="PROSITE" id="PS00049">
    <property type="entry name" value="RIBOSOMAL_L14"/>
    <property type="match status" value="1"/>
</dbReference>
<proteinExistence type="inferred from homology"/>
<evidence type="ECO:0000255" key="1">
    <source>
        <dbReference type="HAMAP-Rule" id="MF_01367"/>
    </source>
</evidence>
<evidence type="ECO:0000305" key="2"/>
<feature type="chain" id="PRO_0000128559" description="Large ribosomal subunit protein uL14">
    <location>
        <begin position="1"/>
        <end position="122"/>
    </location>
</feature>
<organism>
    <name type="scientific">Spiroplasma citri</name>
    <dbReference type="NCBI Taxonomy" id="2133"/>
    <lineage>
        <taxon>Bacteria</taxon>
        <taxon>Bacillati</taxon>
        <taxon>Mycoplasmatota</taxon>
        <taxon>Mollicutes</taxon>
        <taxon>Entomoplasmatales</taxon>
        <taxon>Spiroplasmataceae</taxon>
        <taxon>Spiroplasma</taxon>
    </lineage>
</organism>
<name>RL14_SPICI</name>
<sequence length="122" mass="13268">MIQQESRLKVADNSGAKEVLVIKNLGGSWRKFTNIGDIVVCTIKKVTPGGIVKKGQVVKAIIVRTKRGLKRSDGTQIQFSENAVVLIKDDKNPRGTRIFGPIAREVKDAGFVKIASLAPEVL</sequence>
<keyword id="KW-0687">Ribonucleoprotein</keyword>
<keyword id="KW-0689">Ribosomal protein</keyword>
<keyword id="KW-0694">RNA-binding</keyword>
<keyword id="KW-0699">rRNA-binding</keyword>
<protein>
    <recommendedName>
        <fullName evidence="1">Large ribosomal subunit protein uL14</fullName>
    </recommendedName>
    <alternativeName>
        <fullName evidence="2">50S ribosomal protein L14</fullName>
    </alternativeName>
</protein>
<gene>
    <name evidence="1" type="primary">rplN</name>
</gene>
<accession>O31165</accession>
<comment type="function">
    <text evidence="1">Binds to 23S rRNA. Forms part of two intersubunit bridges in the 70S ribosome.</text>
</comment>
<comment type="subunit">
    <text evidence="1">Part of the 50S ribosomal subunit. Forms a cluster with proteins L3 and L19. In the 70S ribosome, L14 and L19 interact and together make contacts with the 16S rRNA in bridges B5 and B8.</text>
</comment>
<comment type="similarity">
    <text evidence="1">Belongs to the universal ribosomal protein uL14 family.</text>
</comment>
<reference key="1">
    <citation type="journal article" date="1998" name="J. Biol. Chem.">
        <title>Purification, cloning, and preliminary characterization of a Spiroplasma citri ribosomal protein with DNA binding capacity.</title>
        <authorList>
            <person name="Le Dantec L."/>
            <person name="Castroviejo M."/>
            <person name="Bove J.M."/>
            <person name="Saillard C."/>
        </authorList>
    </citation>
    <scope>NUCLEOTIDE SEQUENCE [GENOMIC DNA]</scope>
    <source>
        <strain>ATCC 27556 / NCPPB 2647 / R8A2</strain>
    </source>
</reference>